<name>MRAY_STRT1</name>
<feature type="chain" id="PRO_0000108910" description="Phospho-N-acetylmuramoyl-pentapeptide-transferase">
    <location>
        <begin position="1"/>
        <end position="340"/>
    </location>
</feature>
<feature type="transmembrane region" description="Helical" evidence="1">
    <location>
        <begin position="3"/>
        <end position="23"/>
    </location>
</feature>
<feature type="transmembrane region" description="Helical" evidence="1">
    <location>
        <begin position="53"/>
        <end position="73"/>
    </location>
</feature>
<feature type="transmembrane region" description="Helical" evidence="1">
    <location>
        <begin position="79"/>
        <end position="99"/>
    </location>
</feature>
<feature type="transmembrane region" description="Helical" evidence="1">
    <location>
        <begin position="119"/>
        <end position="139"/>
    </location>
</feature>
<feature type="transmembrane region" description="Helical" evidence="1">
    <location>
        <begin position="144"/>
        <end position="164"/>
    </location>
</feature>
<feature type="transmembrane region" description="Helical" evidence="1">
    <location>
        <begin position="176"/>
        <end position="196"/>
    </location>
</feature>
<feature type="transmembrane region" description="Helical" evidence="1">
    <location>
        <begin position="200"/>
        <end position="220"/>
    </location>
</feature>
<feature type="transmembrane region" description="Helical" evidence="1">
    <location>
        <begin position="227"/>
        <end position="247"/>
    </location>
</feature>
<feature type="transmembrane region" description="Helical" evidence="1">
    <location>
        <begin position="250"/>
        <end position="270"/>
    </location>
</feature>
<feature type="transmembrane region" description="Helical" evidence="1">
    <location>
        <begin position="315"/>
        <end position="335"/>
    </location>
</feature>
<reference key="1">
    <citation type="journal article" date="2004" name="Nat. Biotechnol.">
        <title>Complete sequence and comparative genome analysis of the dairy bacterium Streptococcus thermophilus.</title>
        <authorList>
            <person name="Bolotin A."/>
            <person name="Quinquis B."/>
            <person name="Renault P."/>
            <person name="Sorokin A."/>
            <person name="Ehrlich S.D."/>
            <person name="Kulakauskas S."/>
            <person name="Lapidus A."/>
            <person name="Goltsman E."/>
            <person name="Mazur M."/>
            <person name="Pusch G.D."/>
            <person name="Fonstein M."/>
            <person name="Overbeek R."/>
            <person name="Kyprides N."/>
            <person name="Purnelle B."/>
            <person name="Prozzi D."/>
            <person name="Ngui K."/>
            <person name="Masuy D."/>
            <person name="Hancy F."/>
            <person name="Burteau S."/>
            <person name="Boutry M."/>
            <person name="Delcour J."/>
            <person name="Goffeau A."/>
            <person name="Hols P."/>
        </authorList>
    </citation>
    <scope>NUCLEOTIDE SEQUENCE [LARGE SCALE GENOMIC DNA]</scope>
    <source>
        <strain>CNRZ 1066</strain>
    </source>
</reference>
<proteinExistence type="inferred from homology"/>
<comment type="function">
    <text evidence="1">Catalyzes the initial step of the lipid cycle reactions in the biosynthesis of the cell wall peptidoglycan: transfers peptidoglycan precursor phospho-MurNAc-pentapeptide from UDP-MurNAc-pentapeptide onto the lipid carrier undecaprenyl phosphate, yielding undecaprenyl-pyrophosphoryl-MurNAc-pentapeptide, known as lipid I.</text>
</comment>
<comment type="catalytic activity">
    <reaction evidence="1">
        <text>UDP-N-acetyl-alpha-D-muramoyl-L-alanyl-gamma-D-glutamyl-L-lysyl-D-alanyl-D-alanine + di-trans,octa-cis-undecaprenyl phosphate = Mur2Ac(oyl-L-Ala-gamma-D-Glu-L-Lys-D-Ala-D-Ala)-di-trans,octa-cis-undecaprenyl diphosphate + UMP</text>
        <dbReference type="Rhea" id="RHEA:21920"/>
        <dbReference type="ChEBI" id="CHEBI:57865"/>
        <dbReference type="ChEBI" id="CHEBI:60032"/>
        <dbReference type="ChEBI" id="CHEBI:60392"/>
        <dbReference type="ChEBI" id="CHEBI:70758"/>
        <dbReference type="EC" id="2.7.8.13"/>
    </reaction>
</comment>
<comment type="cofactor">
    <cofactor evidence="1">
        <name>Mg(2+)</name>
        <dbReference type="ChEBI" id="CHEBI:18420"/>
    </cofactor>
</comment>
<comment type="pathway">
    <text evidence="1">Cell wall biogenesis; peptidoglycan biosynthesis.</text>
</comment>
<comment type="subcellular location">
    <subcellularLocation>
        <location evidence="1">Cell membrane</location>
        <topology evidence="1">Multi-pass membrane protein</topology>
    </subcellularLocation>
</comment>
<comment type="similarity">
    <text evidence="1">Belongs to the glycosyltransferase 4 family. MraY subfamily.</text>
</comment>
<keyword id="KW-0131">Cell cycle</keyword>
<keyword id="KW-0132">Cell division</keyword>
<keyword id="KW-1003">Cell membrane</keyword>
<keyword id="KW-0133">Cell shape</keyword>
<keyword id="KW-0961">Cell wall biogenesis/degradation</keyword>
<keyword id="KW-0460">Magnesium</keyword>
<keyword id="KW-0472">Membrane</keyword>
<keyword id="KW-0479">Metal-binding</keyword>
<keyword id="KW-0573">Peptidoglycan synthesis</keyword>
<keyword id="KW-0808">Transferase</keyword>
<keyword id="KW-0812">Transmembrane</keyword>
<keyword id="KW-1133">Transmembrane helix</keyword>
<protein>
    <recommendedName>
        <fullName evidence="1">Phospho-N-acetylmuramoyl-pentapeptide-transferase</fullName>
        <ecNumber evidence="1">2.7.8.13</ecNumber>
    </recommendedName>
    <alternativeName>
        <fullName evidence="1">UDP-MurNAc-pentapeptide phosphotransferase</fullName>
    </alternativeName>
</protein>
<sequence length="340" mass="37315">MTMSLIAGVAAFVLTVLAMPHFITYYKIKKIGGQQMHEDVKQHLAKAGTPTMGGTVFLVVAILISLIFNFHVFTEGHQAYGATAGILFVILIYGIIGFLDDFLKIFHQINEGLKPWQKMALQIVAGLLFYFIHVLPSGTNSLAIGGLTIQLGVFYVLFVLFWIVGFSNAVNLTDGIDGLASVSVVISLIAYGIIAFVKGELAILTIIITMIGALLGFFVFNHKPAKVFMGDVGSLSLGAMLAVISIALRVEWTLLLIGVVYVLETASVMLQVSYFKYTKRKYGEGRRIFRMTPFHHHLELGGISGKGEKWSEWKVDAFLWTIGALASSITLWMVLGNVMK</sequence>
<dbReference type="EC" id="2.7.8.13" evidence="1"/>
<dbReference type="EMBL" id="CP000024">
    <property type="protein sequence ID" value="AAV63220.1"/>
    <property type="molecule type" value="Genomic_DNA"/>
</dbReference>
<dbReference type="RefSeq" id="WP_011227524.1">
    <property type="nucleotide sequence ID" value="NC_006449.1"/>
</dbReference>
<dbReference type="SMR" id="Q5LY94"/>
<dbReference type="KEGG" id="stc:str1700"/>
<dbReference type="HOGENOM" id="CLU_023982_0_1_9"/>
<dbReference type="UniPathway" id="UPA00219"/>
<dbReference type="GO" id="GO:0005886">
    <property type="term" value="C:plasma membrane"/>
    <property type="evidence" value="ECO:0007669"/>
    <property type="project" value="UniProtKB-SubCell"/>
</dbReference>
<dbReference type="GO" id="GO:0046872">
    <property type="term" value="F:metal ion binding"/>
    <property type="evidence" value="ECO:0007669"/>
    <property type="project" value="UniProtKB-KW"/>
</dbReference>
<dbReference type="GO" id="GO:0008963">
    <property type="term" value="F:phospho-N-acetylmuramoyl-pentapeptide-transferase activity"/>
    <property type="evidence" value="ECO:0007669"/>
    <property type="project" value="UniProtKB-UniRule"/>
</dbReference>
<dbReference type="GO" id="GO:0051301">
    <property type="term" value="P:cell division"/>
    <property type="evidence" value="ECO:0007669"/>
    <property type="project" value="UniProtKB-KW"/>
</dbReference>
<dbReference type="GO" id="GO:0071555">
    <property type="term" value="P:cell wall organization"/>
    <property type="evidence" value="ECO:0007669"/>
    <property type="project" value="UniProtKB-KW"/>
</dbReference>
<dbReference type="GO" id="GO:0009252">
    <property type="term" value="P:peptidoglycan biosynthetic process"/>
    <property type="evidence" value="ECO:0007669"/>
    <property type="project" value="UniProtKB-UniRule"/>
</dbReference>
<dbReference type="GO" id="GO:0008360">
    <property type="term" value="P:regulation of cell shape"/>
    <property type="evidence" value="ECO:0007669"/>
    <property type="project" value="UniProtKB-KW"/>
</dbReference>
<dbReference type="CDD" id="cd06852">
    <property type="entry name" value="GT_MraY"/>
    <property type="match status" value="1"/>
</dbReference>
<dbReference type="HAMAP" id="MF_00038">
    <property type="entry name" value="MraY"/>
    <property type="match status" value="1"/>
</dbReference>
<dbReference type="InterPro" id="IPR000715">
    <property type="entry name" value="Glycosyl_transferase_4"/>
</dbReference>
<dbReference type="InterPro" id="IPR003524">
    <property type="entry name" value="PNAcMuramoyl-5peptid_Trfase"/>
</dbReference>
<dbReference type="InterPro" id="IPR018480">
    <property type="entry name" value="PNAcMuramoyl-5peptid_Trfase_CS"/>
</dbReference>
<dbReference type="NCBIfam" id="TIGR00445">
    <property type="entry name" value="mraY"/>
    <property type="match status" value="1"/>
</dbReference>
<dbReference type="PANTHER" id="PTHR22926">
    <property type="entry name" value="PHOSPHO-N-ACETYLMURAMOYL-PENTAPEPTIDE-TRANSFERASE"/>
    <property type="match status" value="1"/>
</dbReference>
<dbReference type="PANTHER" id="PTHR22926:SF5">
    <property type="entry name" value="PHOSPHO-N-ACETYLMURAMOYL-PENTAPEPTIDE-TRANSFERASE HOMOLOG"/>
    <property type="match status" value="1"/>
</dbReference>
<dbReference type="Pfam" id="PF00953">
    <property type="entry name" value="Glycos_transf_4"/>
    <property type="match status" value="1"/>
</dbReference>
<dbReference type="Pfam" id="PF10555">
    <property type="entry name" value="MraY_sig1"/>
    <property type="match status" value="1"/>
</dbReference>
<dbReference type="PROSITE" id="PS01348">
    <property type="entry name" value="MRAY_2"/>
    <property type="match status" value="1"/>
</dbReference>
<gene>
    <name evidence="1" type="primary">mraY</name>
    <name type="ordered locus">str1700</name>
</gene>
<accession>Q5LY94</accession>
<organism>
    <name type="scientific">Streptococcus thermophilus (strain CNRZ 1066)</name>
    <dbReference type="NCBI Taxonomy" id="299768"/>
    <lineage>
        <taxon>Bacteria</taxon>
        <taxon>Bacillati</taxon>
        <taxon>Bacillota</taxon>
        <taxon>Bacilli</taxon>
        <taxon>Lactobacillales</taxon>
        <taxon>Streptococcaceae</taxon>
        <taxon>Streptococcus</taxon>
    </lineage>
</organism>
<evidence type="ECO:0000255" key="1">
    <source>
        <dbReference type="HAMAP-Rule" id="MF_00038"/>
    </source>
</evidence>